<sequence>MYAIIVTGGKQYKVEAGQAVYVEKLNVEAGEKVTFDQVVFVGGDTPKIGTPTVAGATVTGTVEKQGLEKKVVTFKYKAKKGQHTKKGHRQPYTKVVVDAINA</sequence>
<evidence type="ECO:0000255" key="1">
    <source>
        <dbReference type="HAMAP-Rule" id="MF_01363"/>
    </source>
</evidence>
<evidence type="ECO:0000305" key="2"/>
<proteinExistence type="inferred from homology"/>
<comment type="function">
    <text evidence="1">This protein binds to 23S rRNA in the presence of protein L20.</text>
</comment>
<comment type="subunit">
    <text evidence="1">Part of the 50S ribosomal subunit. Contacts protein L20.</text>
</comment>
<comment type="similarity">
    <text evidence="1">Belongs to the bacterial ribosomal protein bL21 family.</text>
</comment>
<protein>
    <recommendedName>
        <fullName evidence="1">Large ribosomal subunit protein bL21</fullName>
    </recommendedName>
    <alternativeName>
        <fullName evidence="2">50S ribosomal protein L21</fullName>
    </alternativeName>
</protein>
<organism>
    <name type="scientific">Levilactobacillus brevis (strain ATCC 367 / BCRC 12310 / CIP 105137 / JCM 1170 / LMG 11437 / NCIMB 947 / NCTC 947)</name>
    <name type="common">Lactobacillus brevis</name>
    <dbReference type="NCBI Taxonomy" id="387344"/>
    <lineage>
        <taxon>Bacteria</taxon>
        <taxon>Bacillati</taxon>
        <taxon>Bacillota</taxon>
        <taxon>Bacilli</taxon>
        <taxon>Lactobacillales</taxon>
        <taxon>Lactobacillaceae</taxon>
        <taxon>Levilactobacillus</taxon>
    </lineage>
</organism>
<gene>
    <name evidence="1" type="primary">rplU</name>
    <name type="ordered locus">LVIS_0985</name>
</gene>
<feature type="chain" id="PRO_1000067844" description="Large ribosomal subunit protein bL21">
    <location>
        <begin position="1"/>
        <end position="102"/>
    </location>
</feature>
<dbReference type="EMBL" id="CP000416">
    <property type="protein sequence ID" value="ABJ64118.1"/>
    <property type="molecule type" value="Genomic_DNA"/>
</dbReference>
<dbReference type="RefSeq" id="WP_011667708.1">
    <property type="nucleotide sequence ID" value="NC_008497.1"/>
</dbReference>
<dbReference type="SMR" id="Q03RQ4"/>
<dbReference type="STRING" id="387344.LVIS_0985"/>
<dbReference type="GeneID" id="56992794"/>
<dbReference type="KEGG" id="lbr:LVIS_0985"/>
<dbReference type="eggNOG" id="COG0261">
    <property type="taxonomic scope" value="Bacteria"/>
</dbReference>
<dbReference type="HOGENOM" id="CLU_061463_3_2_9"/>
<dbReference type="Proteomes" id="UP000001652">
    <property type="component" value="Chromosome"/>
</dbReference>
<dbReference type="GO" id="GO:0005737">
    <property type="term" value="C:cytoplasm"/>
    <property type="evidence" value="ECO:0007669"/>
    <property type="project" value="UniProtKB-ARBA"/>
</dbReference>
<dbReference type="GO" id="GO:1990904">
    <property type="term" value="C:ribonucleoprotein complex"/>
    <property type="evidence" value="ECO:0007669"/>
    <property type="project" value="UniProtKB-KW"/>
</dbReference>
<dbReference type="GO" id="GO:0005840">
    <property type="term" value="C:ribosome"/>
    <property type="evidence" value="ECO:0007669"/>
    <property type="project" value="UniProtKB-KW"/>
</dbReference>
<dbReference type="GO" id="GO:0019843">
    <property type="term" value="F:rRNA binding"/>
    <property type="evidence" value="ECO:0007669"/>
    <property type="project" value="UniProtKB-UniRule"/>
</dbReference>
<dbReference type="GO" id="GO:0003735">
    <property type="term" value="F:structural constituent of ribosome"/>
    <property type="evidence" value="ECO:0007669"/>
    <property type="project" value="InterPro"/>
</dbReference>
<dbReference type="GO" id="GO:0006412">
    <property type="term" value="P:translation"/>
    <property type="evidence" value="ECO:0007669"/>
    <property type="project" value="UniProtKB-UniRule"/>
</dbReference>
<dbReference type="HAMAP" id="MF_01363">
    <property type="entry name" value="Ribosomal_bL21"/>
    <property type="match status" value="1"/>
</dbReference>
<dbReference type="InterPro" id="IPR028909">
    <property type="entry name" value="bL21-like"/>
</dbReference>
<dbReference type="InterPro" id="IPR036164">
    <property type="entry name" value="bL21-like_sf"/>
</dbReference>
<dbReference type="InterPro" id="IPR001787">
    <property type="entry name" value="Ribosomal_bL21"/>
</dbReference>
<dbReference type="InterPro" id="IPR018258">
    <property type="entry name" value="Ribosomal_bL21_CS"/>
</dbReference>
<dbReference type="NCBIfam" id="TIGR00061">
    <property type="entry name" value="L21"/>
    <property type="match status" value="1"/>
</dbReference>
<dbReference type="PANTHER" id="PTHR21349">
    <property type="entry name" value="50S RIBOSOMAL PROTEIN L21"/>
    <property type="match status" value="1"/>
</dbReference>
<dbReference type="PANTHER" id="PTHR21349:SF0">
    <property type="entry name" value="LARGE RIBOSOMAL SUBUNIT PROTEIN BL21M"/>
    <property type="match status" value="1"/>
</dbReference>
<dbReference type="Pfam" id="PF00829">
    <property type="entry name" value="Ribosomal_L21p"/>
    <property type="match status" value="1"/>
</dbReference>
<dbReference type="SUPFAM" id="SSF141091">
    <property type="entry name" value="L21p-like"/>
    <property type="match status" value="1"/>
</dbReference>
<dbReference type="PROSITE" id="PS01169">
    <property type="entry name" value="RIBOSOMAL_L21"/>
    <property type="match status" value="1"/>
</dbReference>
<name>RL21_LEVBA</name>
<accession>Q03RQ4</accession>
<reference key="1">
    <citation type="journal article" date="2006" name="Proc. Natl. Acad. Sci. U.S.A.">
        <title>Comparative genomics of the lactic acid bacteria.</title>
        <authorList>
            <person name="Makarova K.S."/>
            <person name="Slesarev A."/>
            <person name="Wolf Y.I."/>
            <person name="Sorokin A."/>
            <person name="Mirkin B."/>
            <person name="Koonin E.V."/>
            <person name="Pavlov A."/>
            <person name="Pavlova N."/>
            <person name="Karamychev V."/>
            <person name="Polouchine N."/>
            <person name="Shakhova V."/>
            <person name="Grigoriev I."/>
            <person name="Lou Y."/>
            <person name="Rohksar D."/>
            <person name="Lucas S."/>
            <person name="Huang K."/>
            <person name="Goodstein D.M."/>
            <person name="Hawkins T."/>
            <person name="Plengvidhya V."/>
            <person name="Welker D."/>
            <person name="Hughes J."/>
            <person name="Goh Y."/>
            <person name="Benson A."/>
            <person name="Baldwin K."/>
            <person name="Lee J.-H."/>
            <person name="Diaz-Muniz I."/>
            <person name="Dosti B."/>
            <person name="Smeianov V."/>
            <person name="Wechter W."/>
            <person name="Barabote R."/>
            <person name="Lorca G."/>
            <person name="Altermann E."/>
            <person name="Barrangou R."/>
            <person name="Ganesan B."/>
            <person name="Xie Y."/>
            <person name="Rawsthorne H."/>
            <person name="Tamir D."/>
            <person name="Parker C."/>
            <person name="Breidt F."/>
            <person name="Broadbent J.R."/>
            <person name="Hutkins R."/>
            <person name="O'Sullivan D."/>
            <person name="Steele J."/>
            <person name="Unlu G."/>
            <person name="Saier M.H. Jr."/>
            <person name="Klaenhammer T."/>
            <person name="Richardson P."/>
            <person name="Kozyavkin S."/>
            <person name="Weimer B.C."/>
            <person name="Mills D.A."/>
        </authorList>
    </citation>
    <scope>NUCLEOTIDE SEQUENCE [LARGE SCALE GENOMIC DNA]</scope>
    <source>
        <strain>ATCC 367 / BCRC 12310 / CIP 105137 / JCM 1170 / LMG 11437 / NCIMB 947 / NCTC 947</strain>
    </source>
</reference>
<keyword id="KW-1185">Reference proteome</keyword>
<keyword id="KW-0687">Ribonucleoprotein</keyword>
<keyword id="KW-0689">Ribosomal protein</keyword>
<keyword id="KW-0694">RNA-binding</keyword>
<keyword id="KW-0699">rRNA-binding</keyword>